<reference key="1">
    <citation type="journal article" date="2003" name="Appl. Microbiol. Biotechnol.">
        <title>The Corynebacterium glutamicum genome: features and impacts on biotechnological processes.</title>
        <authorList>
            <person name="Ikeda M."/>
            <person name="Nakagawa S."/>
        </authorList>
    </citation>
    <scope>NUCLEOTIDE SEQUENCE [LARGE SCALE GENOMIC DNA]</scope>
    <source>
        <strain>ATCC 13032 / DSM 20300 / JCM 1318 / BCRC 11384 / CCUG 27702 / LMG 3730 / NBRC 12168 / NCIMB 10025 / NRRL B-2784 / 534</strain>
    </source>
</reference>
<reference key="2">
    <citation type="journal article" date="2003" name="J. Biotechnol.">
        <title>The complete Corynebacterium glutamicum ATCC 13032 genome sequence and its impact on the production of L-aspartate-derived amino acids and vitamins.</title>
        <authorList>
            <person name="Kalinowski J."/>
            <person name="Bathe B."/>
            <person name="Bartels D."/>
            <person name="Bischoff N."/>
            <person name="Bott M."/>
            <person name="Burkovski A."/>
            <person name="Dusch N."/>
            <person name="Eggeling L."/>
            <person name="Eikmanns B.J."/>
            <person name="Gaigalat L."/>
            <person name="Goesmann A."/>
            <person name="Hartmann M."/>
            <person name="Huthmacher K."/>
            <person name="Kraemer R."/>
            <person name="Linke B."/>
            <person name="McHardy A.C."/>
            <person name="Meyer F."/>
            <person name="Moeckel B."/>
            <person name="Pfefferle W."/>
            <person name="Puehler A."/>
            <person name="Rey D.A."/>
            <person name="Rueckert C."/>
            <person name="Rupp O."/>
            <person name="Sahm H."/>
            <person name="Wendisch V.F."/>
            <person name="Wiegraebe I."/>
            <person name="Tauch A."/>
        </authorList>
    </citation>
    <scope>NUCLEOTIDE SEQUENCE [LARGE SCALE GENOMIC DNA]</scope>
    <source>
        <strain>ATCC 13032 / DSM 20300 / JCM 1318 / BCRC 11384 / CCUG 27702 / LMG 3730 / NBRC 12168 / NCIMB 10025 / NRRL B-2784 / 534</strain>
    </source>
</reference>
<organism>
    <name type="scientific">Corynebacterium glutamicum (strain ATCC 13032 / DSM 20300 / JCM 1318 / BCRC 11384 / CCUG 27702 / LMG 3730 / NBRC 12168 / NCIMB 10025 / NRRL B-2784 / 534)</name>
    <dbReference type="NCBI Taxonomy" id="196627"/>
    <lineage>
        <taxon>Bacteria</taxon>
        <taxon>Bacillati</taxon>
        <taxon>Actinomycetota</taxon>
        <taxon>Actinomycetes</taxon>
        <taxon>Mycobacteriales</taxon>
        <taxon>Corynebacteriaceae</taxon>
        <taxon>Corynebacterium</taxon>
    </lineage>
</organism>
<proteinExistence type="inferred from homology"/>
<name>Y1545_CORGL</name>
<accession>Q8NQ93</accession>
<feature type="chain" id="PRO_0000070551" description="UPF0210 protein Cgl1545/cg1743">
    <location>
        <begin position="1"/>
        <end position="464"/>
    </location>
</feature>
<evidence type="ECO:0000255" key="1">
    <source>
        <dbReference type="HAMAP-Rule" id="MF_01221"/>
    </source>
</evidence>
<evidence type="ECO:0000305" key="2"/>
<sequence length="464" mass="47987">MHMDDFSASLGFTDRSSRGILDTIEMIEKYRLDIRTVTMGISLLECARGSMEETATAVYDRVTSQAARLVEVCEGIERELGIPIVNKRISVTPIALVTAGCSGDPVDVARALDKAAKDVGVNFIGGYSALVEKGGTTSDIRLIRSIPEALSTTDVVCGSVNVASSRAGINMNAVNEMGKVVKQAAELTKDRSAIACAKLVVFANSVGDNPFMAGAFHGIEEPDCVVSVGVSGPGVVSRALGNLQGATLDQVAEEIKKAAFKITRTGQLVGAMASERLGVPFGIVDLSLAPTAEVGDSVANILEVMGLDQVGTHGTTAALALLNDAVKKGGMMACSRVGGLSGSFIPVSEDKGMIDAVRTGAISIDKLEAMTAICSVGLDMIAIPGDTPAETISGMIADEAAIGVMNHKTTAVRVIPVPGTVPGDEVDFGGLLGYAPVIPVNTVGNSEFIHRGGFIPAPVHGFRN</sequence>
<keyword id="KW-1185">Reference proteome</keyword>
<dbReference type="EMBL" id="BA000036">
    <property type="protein sequence ID" value="BAB98938.1"/>
    <property type="molecule type" value="Genomic_DNA"/>
</dbReference>
<dbReference type="EMBL" id="BX927152">
    <property type="protein sequence ID" value="CAF21554.1"/>
    <property type="status" value="ALT_INIT"/>
    <property type="molecule type" value="Genomic_DNA"/>
</dbReference>
<dbReference type="RefSeq" id="NP_600761.1">
    <property type="nucleotide sequence ID" value="NC_003450.3"/>
</dbReference>
<dbReference type="SMR" id="Q8NQ93"/>
<dbReference type="STRING" id="196627.cg1743"/>
<dbReference type="KEGG" id="cgb:cg1743"/>
<dbReference type="KEGG" id="cgl:Cgl1545"/>
<dbReference type="PATRIC" id="fig|196627.13.peg.1513"/>
<dbReference type="eggNOG" id="COG2848">
    <property type="taxonomic scope" value="Bacteria"/>
</dbReference>
<dbReference type="HOGENOM" id="CLU_048704_0_0_11"/>
<dbReference type="OrthoDB" id="9763001at2"/>
<dbReference type="BioCyc" id="CORYNE:G18NG-11130-MONOMER"/>
<dbReference type="Proteomes" id="UP000000582">
    <property type="component" value="Chromosome"/>
</dbReference>
<dbReference type="Proteomes" id="UP000001009">
    <property type="component" value="Chromosome"/>
</dbReference>
<dbReference type="CDD" id="cd08025">
    <property type="entry name" value="RNR_PFL_like_DUF711"/>
    <property type="match status" value="1"/>
</dbReference>
<dbReference type="Gene3D" id="3.20.70.20">
    <property type="match status" value="1"/>
</dbReference>
<dbReference type="HAMAP" id="MF_01221">
    <property type="entry name" value="UPF0210"/>
    <property type="match status" value="1"/>
</dbReference>
<dbReference type="InterPro" id="IPR007841">
    <property type="entry name" value="UPF0210"/>
</dbReference>
<dbReference type="NCBIfam" id="NF003700">
    <property type="entry name" value="PRK05313.1"/>
    <property type="match status" value="1"/>
</dbReference>
<dbReference type="PANTHER" id="PTHR37560:SF1">
    <property type="entry name" value="UPF0210 PROTEIN MJ1665"/>
    <property type="match status" value="1"/>
</dbReference>
<dbReference type="PANTHER" id="PTHR37560">
    <property type="entry name" value="UPF0210 PROTEIN SPR0218"/>
    <property type="match status" value="1"/>
</dbReference>
<dbReference type="Pfam" id="PF05167">
    <property type="entry name" value="DUF711"/>
    <property type="match status" value="1"/>
</dbReference>
<dbReference type="SUPFAM" id="SSF51998">
    <property type="entry name" value="PFL-like glycyl radical enzymes"/>
    <property type="match status" value="1"/>
</dbReference>
<protein>
    <recommendedName>
        <fullName evidence="1">UPF0210 protein Cgl1545/cg1743</fullName>
    </recommendedName>
</protein>
<comment type="subunit">
    <text evidence="1">Homodimer.</text>
</comment>
<comment type="similarity">
    <text evidence="1">Belongs to the UPF0210 family.</text>
</comment>
<comment type="sequence caution" evidence="2">
    <conflict type="erroneous initiation">
        <sequence resource="EMBL-CDS" id="CAF21554"/>
    </conflict>
</comment>
<gene>
    <name type="ordered locus">Cgl1545</name>
    <name type="ordered locus">cg1743</name>
</gene>